<dbReference type="EC" id="2.7.7.87" evidence="1"/>
<dbReference type="EMBL" id="AE016826">
    <property type="protein sequence ID" value="AAO27144.1"/>
    <property type="molecule type" value="Genomic_DNA"/>
</dbReference>
<dbReference type="RefSeq" id="WP_011091545.1">
    <property type="nucleotide sequence ID" value="NC_004545.1"/>
</dbReference>
<dbReference type="SMR" id="Q89A89"/>
<dbReference type="STRING" id="224915.bbp_438"/>
<dbReference type="KEGG" id="bab:bbp_438"/>
<dbReference type="eggNOG" id="COG0009">
    <property type="taxonomic scope" value="Bacteria"/>
</dbReference>
<dbReference type="HOGENOM" id="CLU_031397_6_0_6"/>
<dbReference type="OrthoDB" id="9814580at2"/>
<dbReference type="Proteomes" id="UP000000601">
    <property type="component" value="Chromosome"/>
</dbReference>
<dbReference type="GO" id="GO:0005737">
    <property type="term" value="C:cytoplasm"/>
    <property type="evidence" value="ECO:0007669"/>
    <property type="project" value="UniProtKB-SubCell"/>
</dbReference>
<dbReference type="GO" id="GO:0005524">
    <property type="term" value="F:ATP binding"/>
    <property type="evidence" value="ECO:0007669"/>
    <property type="project" value="UniProtKB-UniRule"/>
</dbReference>
<dbReference type="GO" id="GO:0003725">
    <property type="term" value="F:double-stranded RNA binding"/>
    <property type="evidence" value="ECO:0007669"/>
    <property type="project" value="InterPro"/>
</dbReference>
<dbReference type="GO" id="GO:0061710">
    <property type="term" value="F:L-threonylcarbamoyladenylate synthase"/>
    <property type="evidence" value="ECO:0007669"/>
    <property type="project" value="UniProtKB-EC"/>
</dbReference>
<dbReference type="GO" id="GO:0000049">
    <property type="term" value="F:tRNA binding"/>
    <property type="evidence" value="ECO:0007669"/>
    <property type="project" value="TreeGrafter"/>
</dbReference>
<dbReference type="GO" id="GO:0006450">
    <property type="term" value="P:regulation of translational fidelity"/>
    <property type="evidence" value="ECO:0007669"/>
    <property type="project" value="TreeGrafter"/>
</dbReference>
<dbReference type="GO" id="GO:0002949">
    <property type="term" value="P:tRNA threonylcarbamoyladenosine modification"/>
    <property type="evidence" value="ECO:0007669"/>
    <property type="project" value="UniProtKB-UniRule"/>
</dbReference>
<dbReference type="Gene3D" id="3.90.870.10">
    <property type="entry name" value="DHBP synthase"/>
    <property type="match status" value="1"/>
</dbReference>
<dbReference type="HAMAP" id="MF_01852">
    <property type="entry name" value="TsaC"/>
    <property type="match status" value="1"/>
</dbReference>
<dbReference type="InterPro" id="IPR017945">
    <property type="entry name" value="DHBP_synth_RibB-like_a/b_dom"/>
</dbReference>
<dbReference type="InterPro" id="IPR006070">
    <property type="entry name" value="Sua5-like_dom"/>
</dbReference>
<dbReference type="InterPro" id="IPR023535">
    <property type="entry name" value="TC-AMP_synthase"/>
</dbReference>
<dbReference type="InterPro" id="IPR050156">
    <property type="entry name" value="TC-AMP_synthase_SUA5"/>
</dbReference>
<dbReference type="PANTHER" id="PTHR17490">
    <property type="entry name" value="SUA5"/>
    <property type="match status" value="1"/>
</dbReference>
<dbReference type="PANTHER" id="PTHR17490:SF18">
    <property type="entry name" value="THREONYLCARBAMOYL-AMP SYNTHASE"/>
    <property type="match status" value="1"/>
</dbReference>
<dbReference type="Pfam" id="PF01300">
    <property type="entry name" value="Sua5_yciO_yrdC"/>
    <property type="match status" value="1"/>
</dbReference>
<dbReference type="SUPFAM" id="SSF55821">
    <property type="entry name" value="YrdC/RibB"/>
    <property type="match status" value="1"/>
</dbReference>
<dbReference type="PROSITE" id="PS51163">
    <property type="entry name" value="YRDC"/>
    <property type="match status" value="1"/>
</dbReference>
<feature type="chain" id="PRO_0000202023" description="Threonylcarbamoyl-AMP synthase">
    <location>
        <begin position="1"/>
        <end position="186"/>
    </location>
</feature>
<feature type="domain" description="YrdC-like" evidence="1">
    <location>
        <begin position="3"/>
        <end position="186"/>
    </location>
</feature>
<sequence length="186" mass="20677">MNILSLSECVDRLRKNLVIAYPTESVLGLGCNPESIDAVKVLLKLKKRKLNKGFILVASHFNQIRSYISESKLSIYHKKILYSSWPDTITYLLPAKSFVPDWLTGRSNFLGIRISAHNGINKLCSAFGKAIISTSANISGRNPCRTYEEFLKQFGTTVPILCGPLGTRKNPSKILNIINGSLIRHG</sequence>
<accession>Q89A89</accession>
<protein>
    <recommendedName>
        <fullName evidence="1">Threonylcarbamoyl-AMP synthase</fullName>
        <shortName evidence="1">TC-AMP synthase</shortName>
        <ecNumber evidence="1">2.7.7.87</ecNumber>
    </recommendedName>
    <alternativeName>
        <fullName evidence="1">L-threonylcarbamoyladenylate synthase</fullName>
    </alternativeName>
    <alternativeName>
        <fullName evidence="1">t(6)A37 threonylcarbamoyladenosine biosynthesis protein TsaC</fullName>
    </alternativeName>
    <alternativeName>
        <fullName evidence="1">tRNA threonylcarbamoyladenosine biosynthesis protein TsaC</fullName>
    </alternativeName>
</protein>
<evidence type="ECO:0000255" key="1">
    <source>
        <dbReference type="HAMAP-Rule" id="MF_01852"/>
    </source>
</evidence>
<proteinExistence type="inferred from homology"/>
<gene>
    <name evidence="1" type="primary">tsaC</name>
    <name type="synonym">rimN</name>
    <name type="ordered locus">bbp_438</name>
</gene>
<name>TSAC_BUCBP</name>
<organism>
    <name type="scientific">Buchnera aphidicola subsp. Baizongia pistaciae (strain Bp)</name>
    <dbReference type="NCBI Taxonomy" id="224915"/>
    <lineage>
        <taxon>Bacteria</taxon>
        <taxon>Pseudomonadati</taxon>
        <taxon>Pseudomonadota</taxon>
        <taxon>Gammaproteobacteria</taxon>
        <taxon>Enterobacterales</taxon>
        <taxon>Erwiniaceae</taxon>
        <taxon>Buchnera</taxon>
    </lineage>
</organism>
<reference key="1">
    <citation type="journal article" date="2003" name="Proc. Natl. Acad. Sci. U.S.A.">
        <title>Reductive genome evolution in Buchnera aphidicola.</title>
        <authorList>
            <person name="van Ham R.C.H.J."/>
            <person name="Kamerbeek J."/>
            <person name="Palacios C."/>
            <person name="Rausell C."/>
            <person name="Abascal F."/>
            <person name="Bastolla U."/>
            <person name="Fernandez J.M."/>
            <person name="Jimenez L."/>
            <person name="Postigo M."/>
            <person name="Silva F.J."/>
            <person name="Tamames J."/>
            <person name="Viguera E."/>
            <person name="Latorre A."/>
            <person name="Valencia A."/>
            <person name="Moran F."/>
            <person name="Moya A."/>
        </authorList>
    </citation>
    <scope>NUCLEOTIDE SEQUENCE [LARGE SCALE GENOMIC DNA]</scope>
    <source>
        <strain>Bp</strain>
    </source>
</reference>
<keyword id="KW-0067">ATP-binding</keyword>
<keyword id="KW-0963">Cytoplasm</keyword>
<keyword id="KW-0547">Nucleotide-binding</keyword>
<keyword id="KW-0548">Nucleotidyltransferase</keyword>
<keyword id="KW-1185">Reference proteome</keyword>
<keyword id="KW-0808">Transferase</keyword>
<keyword id="KW-0819">tRNA processing</keyword>
<comment type="function">
    <text evidence="1">Required for the formation of a threonylcarbamoyl group on adenosine at position 37 (t(6)A37) in tRNAs that read codons beginning with adenine. Catalyzes the conversion of L-threonine, HCO(3)(-)/CO(2) and ATP to give threonylcarbamoyl-AMP (TC-AMP) as the acyladenylate intermediate, with the release of diphosphate.</text>
</comment>
<comment type="catalytic activity">
    <reaction evidence="1">
        <text>L-threonine + hydrogencarbonate + ATP = L-threonylcarbamoyladenylate + diphosphate + H2O</text>
        <dbReference type="Rhea" id="RHEA:36407"/>
        <dbReference type="ChEBI" id="CHEBI:15377"/>
        <dbReference type="ChEBI" id="CHEBI:17544"/>
        <dbReference type="ChEBI" id="CHEBI:30616"/>
        <dbReference type="ChEBI" id="CHEBI:33019"/>
        <dbReference type="ChEBI" id="CHEBI:57926"/>
        <dbReference type="ChEBI" id="CHEBI:73682"/>
        <dbReference type="EC" id="2.7.7.87"/>
    </reaction>
</comment>
<comment type="subcellular location">
    <subcellularLocation>
        <location evidence="1">Cytoplasm</location>
    </subcellularLocation>
</comment>
<comment type="similarity">
    <text evidence="1">Belongs to the SUA5 family. TsaC subfamily.</text>
</comment>